<protein>
    <recommendedName>
        <fullName evidence="1">Proteasome-associated ATPase</fullName>
    </recommendedName>
    <alternativeName>
        <fullName evidence="1">AAA ATPase forming ring-shaped complexes</fullName>
        <shortName evidence="1">ARC</shortName>
    </alternativeName>
    <alternativeName>
        <fullName evidence="1">Proteasomal ATPase</fullName>
    </alternativeName>
</protein>
<accession>A6W963</accession>
<keyword id="KW-0067">ATP-binding</keyword>
<keyword id="KW-0143">Chaperone</keyword>
<keyword id="KW-0175">Coiled coil</keyword>
<keyword id="KW-0547">Nucleotide-binding</keyword>
<keyword id="KW-0647">Proteasome</keyword>
<keyword id="KW-1185">Reference proteome</keyword>
<feature type="chain" id="PRO_0000396988" description="Proteasome-associated ATPase">
    <location>
        <begin position="1"/>
        <end position="578"/>
    </location>
</feature>
<feature type="region of interest" description="Docks into pockets in the proteasome alpha-ring" evidence="1">
    <location>
        <begin position="577"/>
        <end position="578"/>
    </location>
</feature>
<feature type="coiled-coil region" evidence="1">
    <location>
        <begin position="35"/>
        <end position="84"/>
    </location>
</feature>
<feature type="binding site" evidence="1">
    <location>
        <begin position="266"/>
        <end position="271"/>
    </location>
    <ligand>
        <name>ATP</name>
        <dbReference type="ChEBI" id="CHEBI:30616"/>
    </ligand>
</feature>
<evidence type="ECO:0000255" key="1">
    <source>
        <dbReference type="HAMAP-Rule" id="MF_02112"/>
    </source>
</evidence>
<sequence length="578" mass="63327">MSALRVSVDRIHPEGRCAMTEPQRRFGGGGERDARHLTALEEQLGAARTRLAQVSAQNDRLATTLREARDQIVALKAEVDRLGQPPAQFATFLEATGEGTADIVSAGRRMRVAVSPAIDLATLRPGQDVMVNEAMNVVAAFDYERTGELASVKEVLPDGRVLVLARADEERVVRLAGPLLDGPLRVGDSLTVDTRSGFAFERIPKAEVEELVLEEVPDIDYEDIGGLGPQIEAIRDAVELPFLHADLFREHGLRPPKGILLYGPPGCGKTLIAKAVANSLAKKAAELRGESQAKSYFLNIKGPELLNKYVGETERHIRLIFARAREKASGGTPVVVFFDEMESLFRTRGSGVSSDVETTIVPQLLSELDGVERLENVIVIGASNREDMIDPAILRPGRLDVKIKIERPDAESAGQIFAKYLTPDLPLHAEDVAVNGGTKQATVDAMIRATVERMYTETEENEFLEVTYAGGDKEVLYYKDFNSGAMIQNIVDRAKKMAIKDLLTLGQKGVRVDHLMSACVDEFKENEDLPNTTNPDDWARISGKKGERIVFIRTLMQGKKGTEAGRSIDTVANTGQYL</sequence>
<proteinExistence type="inferred from homology"/>
<reference key="1">
    <citation type="journal article" date="2008" name="PLoS ONE">
        <title>Survival in nuclear waste, extreme resistance, and potential applications gleaned from the genome sequence of Kineococcus radiotolerans SRS30216.</title>
        <authorList>
            <person name="Bagwell C.E."/>
            <person name="Bhat S."/>
            <person name="Hawkins G.M."/>
            <person name="Smith B.W."/>
            <person name="Biswas T."/>
            <person name="Hoover T.R."/>
            <person name="Saunders E."/>
            <person name="Han C.S."/>
            <person name="Tsodikov O.V."/>
            <person name="Shimkets L.J."/>
        </authorList>
    </citation>
    <scope>NUCLEOTIDE SEQUENCE [LARGE SCALE GENOMIC DNA]</scope>
    <source>
        <strain>ATCC BAA-149 / DSM 14245 / SRS30216</strain>
    </source>
</reference>
<name>ARC_KINRD</name>
<organism>
    <name type="scientific">Kineococcus radiotolerans (strain ATCC BAA-149 / DSM 14245 / SRS30216)</name>
    <dbReference type="NCBI Taxonomy" id="266940"/>
    <lineage>
        <taxon>Bacteria</taxon>
        <taxon>Bacillati</taxon>
        <taxon>Actinomycetota</taxon>
        <taxon>Actinomycetes</taxon>
        <taxon>Kineosporiales</taxon>
        <taxon>Kineosporiaceae</taxon>
        <taxon>Kineococcus</taxon>
    </lineage>
</organism>
<dbReference type="EMBL" id="CP000750">
    <property type="protein sequence ID" value="ABS03352.1"/>
    <property type="molecule type" value="Genomic_DNA"/>
</dbReference>
<dbReference type="SMR" id="A6W963"/>
<dbReference type="STRING" id="266940.Krad_1866"/>
<dbReference type="KEGG" id="kra:Krad_1866"/>
<dbReference type="eggNOG" id="COG1222">
    <property type="taxonomic scope" value="Bacteria"/>
</dbReference>
<dbReference type="HOGENOM" id="CLU_036054_0_0_11"/>
<dbReference type="OrthoDB" id="9809379at2"/>
<dbReference type="UniPathway" id="UPA00997"/>
<dbReference type="Proteomes" id="UP000001116">
    <property type="component" value="Chromosome"/>
</dbReference>
<dbReference type="GO" id="GO:0000502">
    <property type="term" value="C:proteasome complex"/>
    <property type="evidence" value="ECO:0007669"/>
    <property type="project" value="UniProtKB-KW"/>
</dbReference>
<dbReference type="GO" id="GO:0005524">
    <property type="term" value="F:ATP binding"/>
    <property type="evidence" value="ECO:0007669"/>
    <property type="project" value="UniProtKB-UniRule"/>
</dbReference>
<dbReference type="GO" id="GO:0016887">
    <property type="term" value="F:ATP hydrolysis activity"/>
    <property type="evidence" value="ECO:0007669"/>
    <property type="project" value="UniProtKB-UniRule"/>
</dbReference>
<dbReference type="GO" id="GO:0019941">
    <property type="term" value="P:modification-dependent protein catabolic process"/>
    <property type="evidence" value="ECO:0007669"/>
    <property type="project" value="InterPro"/>
</dbReference>
<dbReference type="GO" id="GO:0010498">
    <property type="term" value="P:proteasomal protein catabolic process"/>
    <property type="evidence" value="ECO:0007669"/>
    <property type="project" value="InterPro"/>
</dbReference>
<dbReference type="FunFam" id="3.40.50.300:FF:001025">
    <property type="entry name" value="ATPase family, AAA domain-containing 2B"/>
    <property type="match status" value="1"/>
</dbReference>
<dbReference type="Gene3D" id="1.10.8.60">
    <property type="match status" value="1"/>
</dbReference>
<dbReference type="Gene3D" id="1.20.5.170">
    <property type="match status" value="1"/>
</dbReference>
<dbReference type="Gene3D" id="2.40.50.140">
    <property type="entry name" value="Nucleic acid-binding proteins"/>
    <property type="match status" value="2"/>
</dbReference>
<dbReference type="Gene3D" id="3.40.50.300">
    <property type="entry name" value="P-loop containing nucleotide triphosphate hydrolases"/>
    <property type="match status" value="1"/>
</dbReference>
<dbReference type="HAMAP" id="MF_02112">
    <property type="entry name" value="ARC_ATPase"/>
    <property type="match status" value="1"/>
</dbReference>
<dbReference type="InterPro" id="IPR003593">
    <property type="entry name" value="AAA+_ATPase"/>
</dbReference>
<dbReference type="InterPro" id="IPR050168">
    <property type="entry name" value="AAA_ATPase_domain"/>
</dbReference>
<dbReference type="InterPro" id="IPR003959">
    <property type="entry name" value="ATPase_AAA_core"/>
</dbReference>
<dbReference type="InterPro" id="IPR003960">
    <property type="entry name" value="ATPase_AAA_CS"/>
</dbReference>
<dbReference type="InterPro" id="IPR012340">
    <property type="entry name" value="NA-bd_OB-fold"/>
</dbReference>
<dbReference type="InterPro" id="IPR027417">
    <property type="entry name" value="P-loop_NTPase"/>
</dbReference>
<dbReference type="InterPro" id="IPR032501">
    <property type="entry name" value="Prot_ATP_ID_OB_2nd"/>
</dbReference>
<dbReference type="InterPro" id="IPR041626">
    <property type="entry name" value="Prot_ATP_ID_OB_N"/>
</dbReference>
<dbReference type="InterPro" id="IPR022482">
    <property type="entry name" value="Proteasome_ATPase"/>
</dbReference>
<dbReference type="NCBIfam" id="TIGR03689">
    <property type="entry name" value="pup_AAA"/>
    <property type="match status" value="1"/>
</dbReference>
<dbReference type="PANTHER" id="PTHR23077">
    <property type="entry name" value="AAA-FAMILY ATPASE"/>
    <property type="match status" value="1"/>
</dbReference>
<dbReference type="PANTHER" id="PTHR23077:SF144">
    <property type="entry name" value="PROTEASOME-ASSOCIATED ATPASE"/>
    <property type="match status" value="1"/>
</dbReference>
<dbReference type="Pfam" id="PF00004">
    <property type="entry name" value="AAA"/>
    <property type="match status" value="1"/>
</dbReference>
<dbReference type="Pfam" id="PF16450">
    <property type="entry name" value="Prot_ATP_ID_OB_C"/>
    <property type="match status" value="1"/>
</dbReference>
<dbReference type="Pfam" id="PF17758">
    <property type="entry name" value="Prot_ATP_ID_OB_N"/>
    <property type="match status" value="1"/>
</dbReference>
<dbReference type="SMART" id="SM00382">
    <property type="entry name" value="AAA"/>
    <property type="match status" value="1"/>
</dbReference>
<dbReference type="SUPFAM" id="SSF52540">
    <property type="entry name" value="P-loop containing nucleoside triphosphate hydrolases"/>
    <property type="match status" value="1"/>
</dbReference>
<dbReference type="PROSITE" id="PS00674">
    <property type="entry name" value="AAA"/>
    <property type="match status" value="1"/>
</dbReference>
<gene>
    <name evidence="1" type="primary">arc</name>
    <name type="ordered locus">Krad_1866</name>
</gene>
<comment type="function">
    <text evidence="1">ATPase which is responsible for recognizing, binding, unfolding and translocation of pupylated proteins into the bacterial 20S proteasome core particle. May be essential for opening the gate of the 20S proteasome via an interaction with its C-terminus, thereby allowing substrate entry and access to the site of proteolysis. Thus, the C-termini of the proteasomal ATPase may function like a 'key in a lock' to induce gate opening and therefore regulate proteolysis.</text>
</comment>
<comment type="pathway">
    <text evidence="1">Protein degradation; proteasomal Pup-dependent pathway.</text>
</comment>
<comment type="subunit">
    <text evidence="1">Homohexamer. Assembles into a hexameric ring structure that caps the 20S proteasome core. Strongly interacts with the prokaryotic ubiquitin-like protein Pup through a hydrophobic interface; the interacting region of ARC lies in its N-terminal coiled-coil domain. There is one Pup binding site per ARC hexamer ring. Upon ATP-binding, the C-terminus of ARC interacts with the alpha-rings of the proteasome core, possibly by binding to the intersubunit pockets.</text>
</comment>
<comment type="domain">
    <text evidence="1">Consists of three main regions, an N-terminal coiled-coil domain that binds to protein Pup and functions as a docking station, an interdomain involved in ARC hexamerization, and a C-terminal ATPase domain of the AAA type.</text>
</comment>
<comment type="similarity">
    <text evidence="1">Belongs to the AAA ATPase family.</text>
</comment>